<name>EXOS3_HUMAN</name>
<organism>
    <name type="scientific">Homo sapiens</name>
    <name type="common">Human</name>
    <dbReference type="NCBI Taxonomy" id="9606"/>
    <lineage>
        <taxon>Eukaryota</taxon>
        <taxon>Metazoa</taxon>
        <taxon>Chordata</taxon>
        <taxon>Craniata</taxon>
        <taxon>Vertebrata</taxon>
        <taxon>Euteleostomi</taxon>
        <taxon>Mammalia</taxon>
        <taxon>Eutheria</taxon>
        <taxon>Euarchontoglires</taxon>
        <taxon>Primates</taxon>
        <taxon>Haplorrhini</taxon>
        <taxon>Catarrhini</taxon>
        <taxon>Hominidae</taxon>
        <taxon>Homo</taxon>
    </lineage>
</organism>
<keyword id="KW-0002">3D-structure</keyword>
<keyword id="KW-0007">Acetylation</keyword>
<keyword id="KW-0025">Alternative splicing</keyword>
<keyword id="KW-0963">Cytoplasm</keyword>
<keyword id="KW-0903">Direct protein sequencing</keyword>
<keyword id="KW-0225">Disease variant</keyword>
<keyword id="KW-0271">Exosome</keyword>
<keyword id="KW-1017">Isopeptide bond</keyword>
<keyword id="KW-0523">Neurodegeneration</keyword>
<keyword id="KW-0539">Nucleus</keyword>
<keyword id="KW-1267">Proteomics identification</keyword>
<keyword id="KW-1185">Reference proteome</keyword>
<keyword id="KW-0694">RNA-binding</keyword>
<keyword id="KW-0698">rRNA processing</keyword>
<keyword id="KW-0832">Ubl conjugation</keyword>
<proteinExistence type="evidence at protein level"/>
<sequence>MAEPASVAAESLAGSRARAARTVLGQVVLPGEELLLPEQEDAEGPGGAVERPLSLNARACSRVRVVCGPGLRRCGDRLLVTKCGRLRHKEPGSGSGGGVYWVDSQQKRYVPVKGDHVIGIVTAKSGDIFKVDVGGSEPASLSYLSFEGATKRNRPNVQVGDLIYGQFVVANKDMEPEMVCIDSCGRANGMGVIGQDGLLFKVTLGLIRKLLAPDCEIIQEVGKLYPLEIVFGMNGRIWVKAKTIQQTLILANILEACEHMTSDQRKQIFSRLAES</sequence>
<comment type="function">
    <text evidence="2 4 6 8">Non-catalytic component of the RNA exosome complex which has 3'-&gt;5' exoribonuclease activity and participates in a multitude of cellular RNA processing and degradation events. In the nucleus, the RNA exosome complex is involved in proper maturation of stable RNA species such as rRNA, snRNA and snoRNA, in the elimination of RNA processing by-products and non-coding 'pervasive' transcripts, such as antisense RNA species and promoter-upstream transcripts (PROMPTs), and of mRNAs with processing defects, thereby limiting or excluding their export to the cytoplasm. The RNA exosome may be involved in Ig class switch recombination (CSR) and/or Ig variable region somatic hypermutation (SHM) by targeting AICDA deamination activity to transcribed dsDNA substrates. In the cytoplasm, the RNA exosome complex is involved in general mRNA turnover and specifically degrades inherently unstable mRNAs containing AU-rich elements (AREs) within their 3' untranslated regions, and in RNA surveillance pathways, preventing translation of aberrant mRNAs. It seems to be involved in degradation of histone mRNA. The catalytic inactive RNA exosome core complex of 9 subunits (Exo-9) is proposed to play a pivotal role in the binding and presentation of RNA for ribonucleolysis, and to serve as a scaffold for the association with catalytic subunits and accessory proteins or complexes. EXOSC3 as peripheral part of the Exo-9 complex stabilizes the hexameric ring of RNase PH-domain subunits through contacts with EXOSC9 and EXOSC5.</text>
</comment>
<comment type="subunit">
    <text evidence="1 3 5 7 9 10 13 14 15">Component of the RNA exosome core complex (Exo-9), composed of EXOSC1, EXOSC2, EXOSC3, EXOSC4, EXOSC5, EXOSC6, EXOSC7, EXOSC8 and EXOSC9; within the complex interacts with EXOSC5 and EXOSC9 (PubMed:29906447, PubMed:30047866). The catalytically inactive RNA exosome core complex (Exo-9) associates with the catalytic subunit EXOSC10/RRP6 (PubMed:11719186, PubMed:20531389, PubMed:29906447). Exo-9 may associate with DIS3 to form the nucleolar exosome complex, or DIS3L to form the cytoplasmic exosome complex (PubMed:11719186, PubMed:20531389, PubMed:29906447). Exo-9 is formed by a hexameric base ring consisting of the heterodimers EXOSC4-EXOSC9, EXOSC5-EXOSC8 and EXOSC6-EXOSC7, and a cap ring consisting of EXOSC1, EXOSC2 and EXOSC3 (PubMed:11719186, PubMed:20531389, PubMed:30047866). The RNA exosome complex associates with cofactors C1D/RRP47, MPHOSPH6/MPP6 and MTREX/MTR4 (PubMed:30047866). Interacts with MPHOSPH6/MPP6; the interaction is direct (PubMed:30047866). Interacts with GTPBP1 (PubMed:21515746). Interacts with ZC3HAV1 (PubMed:21876179). Interacts with DDX17 only in the presence of ZC3HAV1 in an RNA-independent manner (PubMed:18334637). Interacts with DHX36; this interaction occurs in a RNase-insensitive manner (PubMed:14731398). Interacts with HBS1L isoform 2 (PubMed:28204585).</text>
</comment>
<comment type="interaction">
    <interactant intactId="EBI-371866">
        <id>Q9NQT5</id>
    </interactant>
    <interactant intactId="EBI-746012">
        <id>Q92841</id>
        <label>DDX17</label>
    </interactant>
    <organismsDiffer>false</organismsDiffer>
    <experiments>2</experiments>
</comment>
<comment type="interaction">
    <interactant intactId="EBI-371866">
        <id>Q9NQT5</id>
    </interactant>
    <interactant intactId="EBI-373539">
        <id>Q9Y2L1</id>
        <label>DIS3</label>
    </interactant>
    <organismsDiffer>false</organismsDiffer>
    <experiments>4</experiments>
</comment>
<comment type="interaction">
    <interactant intactId="EBI-371866">
        <id>Q9NQT5</id>
    </interactant>
    <interactant intactId="EBI-3672244">
        <id>Q8TF46</id>
        <label>DIS3L</label>
    </interactant>
    <organismsDiffer>false</organismsDiffer>
    <experiments>7</experiments>
</comment>
<comment type="interaction">
    <interactant intactId="EBI-371866">
        <id>Q9NQT5</id>
    </interactant>
    <interactant intactId="EBI-301735">
        <id>Q13868</id>
        <label>EXOSC2</label>
    </interactant>
    <organismsDiffer>false</organismsDiffer>
    <experiments>10</experiments>
</comment>
<comment type="interaction">
    <interactant intactId="EBI-371866">
        <id>Q9NQT5</id>
    </interactant>
    <interactant intactId="EBI-371823">
        <id>Q9NPD3</id>
        <label>EXOSC4</label>
    </interactant>
    <organismsDiffer>false</organismsDiffer>
    <experiments>9</experiments>
</comment>
<comment type="interaction">
    <interactant intactId="EBI-371866">
        <id>Q9NQT5</id>
    </interactant>
    <interactant intactId="EBI-371876">
        <id>Q9NQT4</id>
        <label>EXOSC5</label>
    </interactant>
    <organismsDiffer>false</organismsDiffer>
    <experiments>12</experiments>
</comment>
<comment type="interaction">
    <interactant intactId="EBI-371866">
        <id>Q9NQT5</id>
    </interactant>
    <interactant intactId="EBI-371922">
        <id>Q96B26</id>
        <label>EXOSC8</label>
    </interactant>
    <organismsDiffer>false</organismsDiffer>
    <experiments>7</experiments>
</comment>
<comment type="interaction">
    <interactant intactId="EBI-371866">
        <id>Q9NQT5</id>
    </interactant>
    <interactant intactId="EBI-746981">
        <id>Q969E8</id>
        <label>TSR2</label>
    </interactant>
    <organismsDiffer>false</organismsDiffer>
    <experiments>3</experiments>
</comment>
<comment type="interaction">
    <interactant intactId="EBI-371866">
        <id>Q9NQT5</id>
    </interactant>
    <interactant intactId="EBI-8860250">
        <id>Q8K3Y6</id>
        <label>Zc3hav1</label>
    </interactant>
    <organismsDiffer>true</organismsDiffer>
    <experiments>3</experiments>
</comment>
<comment type="subcellular location">
    <subcellularLocation>
        <location evidence="4">Cytoplasm</location>
    </subcellularLocation>
    <subcellularLocation>
        <location evidence="7">Nucleus</location>
        <location evidence="7">Nucleolus</location>
    </subcellularLocation>
    <subcellularLocation>
        <location evidence="4">Nucleus</location>
    </subcellularLocation>
</comment>
<comment type="alternative products">
    <event type="alternative splicing"/>
    <isoform>
        <id>Q9NQT5-1</id>
        <name>1</name>
        <sequence type="displayed"/>
    </isoform>
    <isoform>
        <id>Q9NQT5-2</id>
        <name>2</name>
        <sequence type="described" ref="VSP_043457"/>
    </isoform>
</comment>
<comment type="disease" evidence="11">
    <disease id="DI-03477">
        <name>Pontocerebellar hypoplasia 1B</name>
        <acronym>PCH1B</acronym>
        <description>A severe autosomal recessive neurologic disorder characterized by a combination of cerebellar and spinal motor neuron degeneration beginning at birth. There is diffuse muscle weakness, progressive microcephaly, global developmental delay, and brainstem involvement.</description>
        <dbReference type="MIM" id="614678"/>
    </disease>
    <text>The disease is caused by variants affecting the gene represented in this entry.</text>
</comment>
<comment type="similarity">
    <text evidence="18">Belongs to the RRP40 family.</text>
</comment>
<feature type="initiator methionine" description="Removed" evidence="16 23 24 25">
    <location>
        <position position="1"/>
    </location>
</feature>
<feature type="chain" id="PRO_0000087131" description="Exosome complex component RRP40">
    <location>
        <begin position="2"/>
        <end position="275"/>
    </location>
</feature>
<feature type="modified residue" description="N-acetylalanine" evidence="16 23 24 25">
    <location>
        <position position="2"/>
    </location>
</feature>
<feature type="cross-link" description="Glycyl lysine isopeptide (Lys-Gly) (interchain with G-Cter in SUMO2)" evidence="26">
    <location>
        <position position="151"/>
    </location>
</feature>
<feature type="splice variant" id="VSP_043457" description="In isoform 2." evidence="17">
    <original>VGDLIYGQFVVANKDMEPEMVCIDSCGRANGMGVIGQDGLLFKVTLGLIRKLLAPDCEIIQEVGKLYPLEIVFGMNGRIWVKAKTIQQTLILANILEACEHMTSDQRKQIFSRLAES</original>
    <variation>AISSRL</variation>
    <location>
        <begin position="159"/>
        <end position="275"/>
    </location>
</feature>
<feature type="sequence variant" id="VAR_068505" description="In PCH1B; dbSNP:rs387907196." evidence="11">
    <original>G</original>
    <variation>A</variation>
    <location>
        <position position="31"/>
    </location>
</feature>
<feature type="sequence variant" id="VAR_074169" description="In dbSNP:rs374550999." evidence="12">
    <original>V</original>
    <variation>F</variation>
    <location>
        <position position="80"/>
    </location>
</feature>
<feature type="sequence variant" id="VAR_068506" description="In PCH1B; dbSNP:rs141138948." evidence="11">
    <original>D</original>
    <variation>A</variation>
    <location>
        <position position="132"/>
    </location>
</feature>
<feature type="sequence variant" id="VAR_068507" description="In PCH1B; dbSNP:rs387907195." evidence="11">
    <original>A</original>
    <variation>P</variation>
    <location>
        <position position="139"/>
    </location>
</feature>
<feature type="sequence variant" id="VAR_054098" description="In dbSNP:rs3208406.">
    <original>Y</original>
    <variation>H</variation>
    <location>
        <position position="225"/>
    </location>
</feature>
<feature type="sequence variant" id="VAR_068508" description="In PCH1B; dbSNP:rs672601332." evidence="11">
    <original>W</original>
    <variation>R</variation>
    <location>
        <position position="238"/>
    </location>
</feature>
<feature type="sequence conflict" description="In Ref. 7; AAD34097." evidence="18" ref="7">
    <original>NARACSRVRV</original>
    <variation>MLERARGCAF</variation>
    <location>
        <begin position="56"/>
        <end position="65"/>
    </location>
</feature>
<feature type="sequence conflict" description="In Ref. 7; AAD34097." evidence="18" ref="7">
    <original>S</original>
    <variation>G</variation>
    <location>
        <position position="95"/>
    </location>
</feature>
<feature type="helix" evidence="27">
    <location>
        <begin position="22"/>
        <end position="24"/>
    </location>
</feature>
<feature type="strand" evidence="27">
    <location>
        <begin position="25"/>
        <end position="27"/>
    </location>
</feature>
<feature type="strand" evidence="27">
    <location>
        <begin position="30"/>
        <end position="34"/>
    </location>
</feature>
<feature type="strand" evidence="27">
    <location>
        <begin position="45"/>
        <end position="49"/>
    </location>
</feature>
<feature type="strand" evidence="28">
    <location>
        <begin position="65"/>
        <end position="67"/>
    </location>
</feature>
<feature type="strand" evidence="28">
    <location>
        <begin position="69"/>
        <end position="74"/>
    </location>
</feature>
<feature type="strand" evidence="27">
    <location>
        <begin position="78"/>
        <end position="80"/>
    </location>
</feature>
<feature type="strand" evidence="27">
    <location>
        <begin position="85"/>
        <end position="89"/>
    </location>
</feature>
<feature type="turn" evidence="27">
    <location>
        <begin position="92"/>
        <end position="94"/>
    </location>
</feature>
<feature type="strand" evidence="27">
    <location>
        <begin position="99"/>
        <end position="103"/>
    </location>
</feature>
<feature type="strand" evidence="27">
    <location>
        <begin position="113"/>
        <end position="125"/>
    </location>
</feature>
<feature type="strand" evidence="27">
    <location>
        <begin position="128"/>
        <end position="132"/>
    </location>
</feature>
<feature type="strand" evidence="27">
    <location>
        <begin position="134"/>
        <end position="137"/>
    </location>
</feature>
<feature type="strand" evidence="27">
    <location>
        <begin position="141"/>
        <end position="143"/>
    </location>
</feature>
<feature type="strand" evidence="27">
    <location>
        <begin position="145"/>
        <end position="147"/>
    </location>
</feature>
<feature type="strand" evidence="27">
    <location>
        <begin position="153"/>
        <end position="157"/>
    </location>
</feature>
<feature type="strand" evidence="27">
    <location>
        <begin position="162"/>
        <end position="169"/>
    </location>
</feature>
<feature type="strand" evidence="28">
    <location>
        <begin position="172"/>
        <end position="174"/>
    </location>
</feature>
<feature type="strand" evidence="27">
    <location>
        <begin position="177"/>
        <end position="179"/>
    </location>
</feature>
<feature type="turn" evidence="27">
    <location>
        <begin position="183"/>
        <end position="185"/>
    </location>
</feature>
<feature type="strand" evidence="27">
    <location>
        <begin position="198"/>
        <end position="200"/>
    </location>
</feature>
<feature type="helix" evidence="27">
    <location>
        <begin position="204"/>
        <end position="211"/>
    </location>
</feature>
<feature type="helix" evidence="27">
    <location>
        <begin position="217"/>
        <end position="220"/>
    </location>
</feature>
<feature type="strand" evidence="27">
    <location>
        <begin position="224"/>
        <end position="226"/>
    </location>
</feature>
<feature type="strand" evidence="27">
    <location>
        <begin position="230"/>
        <end position="232"/>
    </location>
</feature>
<feature type="turn" evidence="27">
    <location>
        <begin position="233"/>
        <end position="235"/>
    </location>
</feature>
<feature type="strand" evidence="27">
    <location>
        <begin position="236"/>
        <end position="239"/>
    </location>
</feature>
<feature type="helix" evidence="27">
    <location>
        <begin position="244"/>
        <end position="256"/>
    </location>
</feature>
<feature type="turn" evidence="27">
    <location>
        <begin position="262"/>
        <end position="264"/>
    </location>
</feature>
<feature type="helix" evidence="27">
    <location>
        <begin position="265"/>
        <end position="274"/>
    </location>
</feature>
<protein>
    <recommendedName>
        <fullName>Exosome complex component RRP40</fullName>
    </recommendedName>
    <alternativeName>
        <fullName>Exosome component 3</fullName>
    </alternativeName>
    <alternativeName>
        <fullName>Ribosomal RNA-processing protein 40</fullName>
    </alternativeName>
    <alternativeName>
        <fullName>p10</fullName>
    </alternativeName>
</protein>
<reference key="1">
    <citation type="journal article" date="2001" name="J. Biol. Chem.">
        <title>Three novel components of the human exosome.</title>
        <authorList>
            <person name="Brouwer R."/>
            <person name="Allmang C."/>
            <person name="Raijmakers R."/>
            <person name="van Aarssen Y."/>
            <person name="Egberts W.V."/>
            <person name="Petfalski E."/>
            <person name="van Venrooij W.J."/>
            <person name="Tollervey D."/>
            <person name="Pruijn G.J.M."/>
        </authorList>
    </citation>
    <scope>NUCLEOTIDE SEQUENCE [MRNA] (ISOFORM 1)</scope>
    <scope>CHARACTERIZATION</scope>
</reference>
<reference key="2">
    <citation type="journal article" date="2004" name="Nat. Genet.">
        <title>Complete sequencing and characterization of 21,243 full-length human cDNAs.</title>
        <authorList>
            <person name="Ota T."/>
            <person name="Suzuki Y."/>
            <person name="Nishikawa T."/>
            <person name="Otsuki T."/>
            <person name="Sugiyama T."/>
            <person name="Irie R."/>
            <person name="Wakamatsu A."/>
            <person name="Hayashi K."/>
            <person name="Sato H."/>
            <person name="Nagai K."/>
            <person name="Kimura K."/>
            <person name="Makita H."/>
            <person name="Sekine M."/>
            <person name="Obayashi M."/>
            <person name="Nishi T."/>
            <person name="Shibahara T."/>
            <person name="Tanaka T."/>
            <person name="Ishii S."/>
            <person name="Yamamoto J."/>
            <person name="Saito K."/>
            <person name="Kawai Y."/>
            <person name="Isono Y."/>
            <person name="Nakamura Y."/>
            <person name="Nagahari K."/>
            <person name="Murakami K."/>
            <person name="Yasuda T."/>
            <person name="Iwayanagi T."/>
            <person name="Wagatsuma M."/>
            <person name="Shiratori A."/>
            <person name="Sudo H."/>
            <person name="Hosoiri T."/>
            <person name="Kaku Y."/>
            <person name="Kodaira H."/>
            <person name="Kondo H."/>
            <person name="Sugawara M."/>
            <person name="Takahashi M."/>
            <person name="Kanda K."/>
            <person name="Yokoi T."/>
            <person name="Furuya T."/>
            <person name="Kikkawa E."/>
            <person name="Omura Y."/>
            <person name="Abe K."/>
            <person name="Kamihara K."/>
            <person name="Katsuta N."/>
            <person name="Sato K."/>
            <person name="Tanikawa M."/>
            <person name="Yamazaki M."/>
            <person name="Ninomiya K."/>
            <person name="Ishibashi T."/>
            <person name="Yamashita H."/>
            <person name="Murakawa K."/>
            <person name="Fujimori K."/>
            <person name="Tanai H."/>
            <person name="Kimata M."/>
            <person name="Watanabe M."/>
            <person name="Hiraoka S."/>
            <person name="Chiba Y."/>
            <person name="Ishida S."/>
            <person name="Ono Y."/>
            <person name="Takiguchi S."/>
            <person name="Watanabe S."/>
            <person name="Yosida M."/>
            <person name="Hotuta T."/>
            <person name="Kusano J."/>
            <person name="Kanehori K."/>
            <person name="Takahashi-Fujii A."/>
            <person name="Hara H."/>
            <person name="Tanase T.-O."/>
            <person name="Nomura Y."/>
            <person name="Togiya S."/>
            <person name="Komai F."/>
            <person name="Hara R."/>
            <person name="Takeuchi K."/>
            <person name="Arita M."/>
            <person name="Imose N."/>
            <person name="Musashino K."/>
            <person name="Yuuki H."/>
            <person name="Oshima A."/>
            <person name="Sasaki N."/>
            <person name="Aotsuka S."/>
            <person name="Yoshikawa Y."/>
            <person name="Matsunawa H."/>
            <person name="Ichihara T."/>
            <person name="Shiohata N."/>
            <person name="Sano S."/>
            <person name="Moriya S."/>
            <person name="Momiyama H."/>
            <person name="Satoh N."/>
            <person name="Takami S."/>
            <person name="Terashima Y."/>
            <person name="Suzuki O."/>
            <person name="Nakagawa S."/>
            <person name="Senoh A."/>
            <person name="Mizoguchi H."/>
            <person name="Goto Y."/>
            <person name="Shimizu F."/>
            <person name="Wakebe H."/>
            <person name="Hishigaki H."/>
            <person name="Watanabe T."/>
            <person name="Sugiyama A."/>
            <person name="Takemoto M."/>
            <person name="Kawakami B."/>
            <person name="Yamazaki M."/>
            <person name="Watanabe K."/>
            <person name="Kumagai A."/>
            <person name="Itakura S."/>
            <person name="Fukuzumi Y."/>
            <person name="Fujimori Y."/>
            <person name="Komiyama M."/>
            <person name="Tashiro H."/>
            <person name="Tanigami A."/>
            <person name="Fujiwara T."/>
            <person name="Ono T."/>
            <person name="Yamada K."/>
            <person name="Fujii Y."/>
            <person name="Ozaki K."/>
            <person name="Hirao M."/>
            <person name="Ohmori Y."/>
            <person name="Kawabata A."/>
            <person name="Hikiji T."/>
            <person name="Kobatake N."/>
            <person name="Inagaki H."/>
            <person name="Ikema Y."/>
            <person name="Okamoto S."/>
            <person name="Okitani R."/>
            <person name="Kawakami T."/>
            <person name="Noguchi S."/>
            <person name="Itoh T."/>
            <person name="Shigeta K."/>
            <person name="Senba T."/>
            <person name="Matsumura K."/>
            <person name="Nakajima Y."/>
            <person name="Mizuno T."/>
            <person name="Morinaga M."/>
            <person name="Sasaki M."/>
            <person name="Togashi T."/>
            <person name="Oyama M."/>
            <person name="Hata H."/>
            <person name="Watanabe M."/>
            <person name="Komatsu T."/>
            <person name="Mizushima-Sugano J."/>
            <person name="Satoh T."/>
            <person name="Shirai Y."/>
            <person name="Takahashi Y."/>
            <person name="Nakagawa K."/>
            <person name="Okumura K."/>
            <person name="Nagase T."/>
            <person name="Nomura N."/>
            <person name="Kikuchi H."/>
            <person name="Masuho Y."/>
            <person name="Yamashita R."/>
            <person name="Nakai K."/>
            <person name="Yada T."/>
            <person name="Nakamura Y."/>
            <person name="Ohara O."/>
            <person name="Isogai T."/>
            <person name="Sugano S."/>
        </authorList>
    </citation>
    <scope>NUCLEOTIDE SEQUENCE [LARGE SCALE MRNA] (ISOFORMS 1 AND 2)</scope>
    <source>
        <tissue>Cerebellum</tissue>
    </source>
</reference>
<reference key="3">
    <citation type="journal article" date="2004" name="Nature">
        <title>DNA sequence and analysis of human chromosome 9.</title>
        <authorList>
            <person name="Humphray S.J."/>
            <person name="Oliver K."/>
            <person name="Hunt A.R."/>
            <person name="Plumb R.W."/>
            <person name="Loveland J.E."/>
            <person name="Howe K.L."/>
            <person name="Andrews T.D."/>
            <person name="Searle S."/>
            <person name="Hunt S.E."/>
            <person name="Scott C.E."/>
            <person name="Jones M.C."/>
            <person name="Ainscough R."/>
            <person name="Almeida J.P."/>
            <person name="Ambrose K.D."/>
            <person name="Ashwell R.I.S."/>
            <person name="Babbage A.K."/>
            <person name="Babbage S."/>
            <person name="Bagguley C.L."/>
            <person name="Bailey J."/>
            <person name="Banerjee R."/>
            <person name="Barker D.J."/>
            <person name="Barlow K.F."/>
            <person name="Bates K."/>
            <person name="Beasley H."/>
            <person name="Beasley O."/>
            <person name="Bird C.P."/>
            <person name="Bray-Allen S."/>
            <person name="Brown A.J."/>
            <person name="Brown J.Y."/>
            <person name="Burford D."/>
            <person name="Burrill W."/>
            <person name="Burton J."/>
            <person name="Carder C."/>
            <person name="Carter N.P."/>
            <person name="Chapman J.C."/>
            <person name="Chen Y."/>
            <person name="Clarke G."/>
            <person name="Clark S.Y."/>
            <person name="Clee C.M."/>
            <person name="Clegg S."/>
            <person name="Collier R.E."/>
            <person name="Corby N."/>
            <person name="Crosier M."/>
            <person name="Cummings A.T."/>
            <person name="Davies J."/>
            <person name="Dhami P."/>
            <person name="Dunn M."/>
            <person name="Dutta I."/>
            <person name="Dyer L.W."/>
            <person name="Earthrowl M.E."/>
            <person name="Faulkner L."/>
            <person name="Fleming C.J."/>
            <person name="Frankish A."/>
            <person name="Frankland J.A."/>
            <person name="French L."/>
            <person name="Fricker D.G."/>
            <person name="Garner P."/>
            <person name="Garnett J."/>
            <person name="Ghori J."/>
            <person name="Gilbert J.G.R."/>
            <person name="Glison C."/>
            <person name="Grafham D.V."/>
            <person name="Gribble S."/>
            <person name="Griffiths C."/>
            <person name="Griffiths-Jones S."/>
            <person name="Grocock R."/>
            <person name="Guy J."/>
            <person name="Hall R.E."/>
            <person name="Hammond S."/>
            <person name="Harley J.L."/>
            <person name="Harrison E.S.I."/>
            <person name="Hart E.A."/>
            <person name="Heath P.D."/>
            <person name="Henderson C.D."/>
            <person name="Hopkins B.L."/>
            <person name="Howard P.J."/>
            <person name="Howden P.J."/>
            <person name="Huckle E."/>
            <person name="Johnson C."/>
            <person name="Johnson D."/>
            <person name="Joy A.A."/>
            <person name="Kay M."/>
            <person name="Keenan S."/>
            <person name="Kershaw J.K."/>
            <person name="Kimberley A.M."/>
            <person name="King A."/>
            <person name="Knights A."/>
            <person name="Laird G.K."/>
            <person name="Langford C."/>
            <person name="Lawlor S."/>
            <person name="Leongamornlert D.A."/>
            <person name="Leversha M."/>
            <person name="Lloyd C."/>
            <person name="Lloyd D.M."/>
            <person name="Lovell J."/>
            <person name="Martin S."/>
            <person name="Mashreghi-Mohammadi M."/>
            <person name="Matthews L."/>
            <person name="McLaren S."/>
            <person name="McLay K.E."/>
            <person name="McMurray A."/>
            <person name="Milne S."/>
            <person name="Nickerson T."/>
            <person name="Nisbett J."/>
            <person name="Nordsiek G."/>
            <person name="Pearce A.V."/>
            <person name="Peck A.I."/>
            <person name="Porter K.M."/>
            <person name="Pandian R."/>
            <person name="Pelan S."/>
            <person name="Phillimore B."/>
            <person name="Povey S."/>
            <person name="Ramsey Y."/>
            <person name="Rand V."/>
            <person name="Scharfe M."/>
            <person name="Sehra H.K."/>
            <person name="Shownkeen R."/>
            <person name="Sims S.K."/>
            <person name="Skuce C.D."/>
            <person name="Smith M."/>
            <person name="Steward C.A."/>
            <person name="Swarbreck D."/>
            <person name="Sycamore N."/>
            <person name="Tester J."/>
            <person name="Thorpe A."/>
            <person name="Tracey A."/>
            <person name="Tromans A."/>
            <person name="Thomas D.W."/>
            <person name="Wall M."/>
            <person name="Wallis J.M."/>
            <person name="West A.P."/>
            <person name="Whitehead S.L."/>
            <person name="Willey D.L."/>
            <person name="Williams S.A."/>
            <person name="Wilming L."/>
            <person name="Wray P.W."/>
            <person name="Young L."/>
            <person name="Ashurst J.L."/>
            <person name="Coulson A."/>
            <person name="Blocker H."/>
            <person name="Durbin R.M."/>
            <person name="Sulston J.E."/>
            <person name="Hubbard T."/>
            <person name="Jackson M.J."/>
            <person name="Bentley D.R."/>
            <person name="Beck S."/>
            <person name="Rogers J."/>
            <person name="Dunham I."/>
        </authorList>
    </citation>
    <scope>NUCLEOTIDE SEQUENCE [LARGE SCALE GENOMIC DNA]</scope>
</reference>
<reference key="4">
    <citation type="submission" date="2005-09" db="EMBL/GenBank/DDBJ databases">
        <authorList>
            <person name="Mural R.J."/>
            <person name="Istrail S."/>
            <person name="Sutton G.G."/>
            <person name="Florea L."/>
            <person name="Halpern A.L."/>
            <person name="Mobarry C.M."/>
            <person name="Lippert R."/>
            <person name="Walenz B."/>
            <person name="Shatkay H."/>
            <person name="Dew I."/>
            <person name="Miller J.R."/>
            <person name="Flanigan M.J."/>
            <person name="Edwards N.J."/>
            <person name="Bolanos R."/>
            <person name="Fasulo D."/>
            <person name="Halldorsson B.V."/>
            <person name="Hannenhalli S."/>
            <person name="Turner R."/>
            <person name="Yooseph S."/>
            <person name="Lu F."/>
            <person name="Nusskern D.R."/>
            <person name="Shue B.C."/>
            <person name="Zheng X.H."/>
            <person name="Zhong F."/>
            <person name="Delcher A.L."/>
            <person name="Huson D.H."/>
            <person name="Kravitz S.A."/>
            <person name="Mouchard L."/>
            <person name="Reinert K."/>
            <person name="Remington K.A."/>
            <person name="Clark A.G."/>
            <person name="Waterman M.S."/>
            <person name="Eichler E.E."/>
            <person name="Adams M.D."/>
            <person name="Hunkapiller M.W."/>
            <person name="Myers E.W."/>
            <person name="Venter J.C."/>
        </authorList>
    </citation>
    <scope>NUCLEOTIDE SEQUENCE [LARGE SCALE GENOMIC DNA]</scope>
</reference>
<reference key="5">
    <citation type="journal article" date="2004" name="Genome Res.">
        <title>The status, quality, and expansion of the NIH full-length cDNA project: the Mammalian Gene Collection (MGC).</title>
        <authorList>
            <consortium name="The MGC Project Team"/>
        </authorList>
    </citation>
    <scope>NUCLEOTIDE SEQUENCE [LARGE SCALE MRNA] (ISOFORM 1)</scope>
    <source>
        <tissue>Skin</tissue>
        <tissue>Uterus</tissue>
    </source>
</reference>
<reference key="6">
    <citation type="submission" date="2005-08" db="UniProtKB">
        <authorList>
            <person name="Bienvenut W.V."/>
        </authorList>
    </citation>
    <scope>PROTEIN SEQUENCE OF 2-16 AND 202-208</scope>
    <scope>CLEAVAGE OF INITIATOR METHIONINE</scope>
    <scope>ACETYLATION AT ALA-2</scope>
    <scope>SUBCELLULAR LOCATION</scope>
    <scope>IDENTIFICATION BY MASS SPECTROMETRY</scope>
    <source>
        <tissue>Cervix carcinoma</tissue>
    </source>
</reference>
<reference key="7">
    <citation type="journal article" date="2000" name="Genome Res.">
        <title>Identification of novel human genes evolutionarily conserved in Caenorhabditis elegans by comparative proteomics.</title>
        <authorList>
            <person name="Lai C.-H."/>
            <person name="Chou C.-Y."/>
            <person name="Ch'ang L.-Y."/>
            <person name="Liu C.-S."/>
            <person name="Lin W.-C."/>
        </authorList>
    </citation>
    <scope>NUCLEOTIDE SEQUENCE [LARGE SCALE MRNA] OF 56-275 (ISOFORM 1)</scope>
</reference>
<reference key="8">
    <citation type="journal article" date="1999" name="Genes Dev.">
        <title>The yeast exosome and human PM-Scl are related complexes of 3'--&gt;5' exonucleases.</title>
        <authorList>
            <person name="Allmang C."/>
            <person name="Petfalski E."/>
            <person name="Podtelejnikov A."/>
            <person name="Mann M."/>
            <person name="Tollervey D."/>
            <person name="Mitchell P."/>
        </authorList>
    </citation>
    <scope>CHARACTERIZATION</scope>
</reference>
<reference key="9">
    <citation type="journal article" date="2001" name="Cell">
        <title>AU binding proteins recruit the exosome to degrade ARE-containing mRNAs.</title>
        <authorList>
            <person name="Chen C.-Y."/>
            <person name="Gherzi R."/>
            <person name="Ong S.-E."/>
            <person name="Chan E.L."/>
            <person name="Raijmakers R."/>
            <person name="Pruijn G.J.M."/>
            <person name="Stoecklin G."/>
            <person name="Moroni C."/>
            <person name="Mann M."/>
            <person name="Karin M."/>
        </authorList>
    </citation>
    <scope>IDENTIFICATION BY MASS SPECTROMETRY</scope>
    <scope>IDENTIFICATION IN THE RNA EXOSOME CORE COMPLEX</scope>
</reference>
<reference key="10">
    <citation type="journal article" date="2002" name="EMBO J.">
        <title>The mammalian exosome mediates the efficient degradation of mRNAs that contain AU-rich elements.</title>
        <authorList>
            <person name="Mukherjee D."/>
            <person name="Gao M."/>
            <person name="O'Connor J.P."/>
            <person name="Raijmakers R."/>
            <person name="Pruijn G."/>
            <person name="Lutz C.S."/>
            <person name="Wilusz J."/>
        </authorList>
    </citation>
    <scope>FUNCTION IN CYTOPLASMIC MRNA DEGRADATION</scope>
</reference>
<reference key="11">
    <citation type="journal article" date="2004" name="Mol. Cell">
        <title>Facilitation of mRNA deadenylation and decay by the exosome-bound, DExH protein RHAU.</title>
        <authorList>
            <person name="Tran H."/>
            <person name="Schilling M."/>
            <person name="Wirbelauer C."/>
            <person name="Hess D."/>
            <person name="Nagamine Y."/>
        </authorList>
    </citation>
    <scope>INTERACTION WITH DHX36</scope>
</reference>
<reference key="12">
    <citation type="journal article" date="2007" name="RNA">
        <title>Human cell growth requires a functional cytoplasmic exosome, which is involved in various mRNA decay pathways.</title>
        <authorList>
            <person name="van Dijk E.L."/>
            <person name="Schilders G."/>
            <person name="Pruijn G.J."/>
        </authorList>
    </citation>
    <scope>FUNCTION IN MRNA DEGRADATION</scope>
    <scope>SUBCELLULAR LOCATION</scope>
</reference>
<reference key="13">
    <citation type="journal article" date="2008" name="Proc. Natl. Acad. Sci. U.S.A.">
        <title>p72 DEAD box RNA helicase is required for optimal function of the zinc-finger antiviral protein.</title>
        <authorList>
            <person name="Chen G."/>
            <person name="Guo X."/>
            <person name="Lv F."/>
            <person name="Xu Y."/>
            <person name="Gao G."/>
        </authorList>
    </citation>
    <scope>INTERACTION WITH DDX17</scope>
</reference>
<reference key="14">
    <citation type="journal article" date="2008" name="Science">
        <title>RNA exosome depletion reveals transcription upstream of active human promoters.</title>
        <authorList>
            <person name="Preker P."/>
            <person name="Nielsen J."/>
            <person name="Kammler S."/>
            <person name="Lykke-Andersen S."/>
            <person name="Christensen M.S."/>
            <person name="Mapendano C.K."/>
            <person name="Schierup M.H."/>
            <person name="Jensen T.H."/>
        </authorList>
    </citation>
    <scope>FUNCTION IN PROMPT DEGRADATION</scope>
</reference>
<reference key="15">
    <citation type="journal article" date="2009" name="Anal. Chem.">
        <title>Lys-N and trypsin cover complementary parts of the phosphoproteome in a refined SCX-based approach.</title>
        <authorList>
            <person name="Gauci S."/>
            <person name="Helbig A.O."/>
            <person name="Slijper M."/>
            <person name="Krijgsveld J."/>
            <person name="Heck A.J."/>
            <person name="Mohammed S."/>
        </authorList>
    </citation>
    <scope>ACETYLATION [LARGE SCALE ANALYSIS] AT ALA-2</scope>
    <scope>CLEAVAGE OF INITIATOR METHIONINE [LARGE SCALE ANALYSIS]</scope>
    <scope>IDENTIFICATION BY MASS SPECTROMETRY [LARGE SCALE ANALYSIS]</scope>
</reference>
<reference key="16">
    <citation type="journal article" date="2010" name="EMBO J.">
        <title>Dis3-like 1: a novel exoribonuclease associated with the human exosome.</title>
        <authorList>
            <person name="Staals R.H."/>
            <person name="Bronkhorst A.W."/>
            <person name="Schilders G."/>
            <person name="Slomovic S."/>
            <person name="Schuster G."/>
            <person name="Heck A.J."/>
            <person name="Raijmakers R."/>
            <person name="Pruijn G.J."/>
        </authorList>
    </citation>
    <scope>IDENTIFICATION IN THE RNA EXOSOME COMPLEX</scope>
    <scope>IDENTIFICATION BY MASS SPECTROMETRY</scope>
    <scope>SUBCELLULAR LOCATION</scope>
    <scope>INTERACTION WITH DIS3L</scope>
</reference>
<reference key="17">
    <citation type="journal article" date="2011" name="BMC Syst. Biol.">
        <title>Initial characterization of the human central proteome.</title>
        <authorList>
            <person name="Burkard T.R."/>
            <person name="Planyavsky M."/>
            <person name="Kaupe I."/>
            <person name="Breitwieser F.P."/>
            <person name="Buerckstuemmer T."/>
            <person name="Bennett K.L."/>
            <person name="Superti-Furga G."/>
            <person name="Colinge J."/>
        </authorList>
    </citation>
    <scope>IDENTIFICATION BY MASS SPECTROMETRY [LARGE SCALE ANALYSIS]</scope>
</reference>
<reference key="18">
    <citation type="journal article" date="2011" name="Cell">
        <title>The RNA exosome targets the AID cytidine deaminase to both strands of transcribed duplex DNA substrates.</title>
        <authorList>
            <person name="Basu U."/>
            <person name="Meng F.L."/>
            <person name="Keim C."/>
            <person name="Grinstein V."/>
            <person name="Pefanis E."/>
            <person name="Eccleston J."/>
            <person name="Zhang T."/>
            <person name="Myers D."/>
            <person name="Wasserman C.R."/>
            <person name="Wesemann D.R."/>
            <person name="Januszyk K."/>
            <person name="Gregory R.I."/>
            <person name="Deng H."/>
            <person name="Lima C.D."/>
            <person name="Alt F.W."/>
        </authorList>
    </citation>
    <scope>FUNCTION IN DEAMINATION OF TRANSCRIBED DNA SUBSTRATE</scope>
</reference>
<reference key="19">
    <citation type="journal article" date="2011" name="FASEB J.">
        <title>Modulation of exosome-mediated mRNA turnover by interaction of GTP-binding protein 1 (GTPBP1) with its target mRNAs.</title>
        <authorList>
            <person name="Woo K.C."/>
            <person name="Kim T.D."/>
            <person name="Lee K.H."/>
            <person name="Kim D.Y."/>
            <person name="Kim S."/>
            <person name="Lee H.R."/>
            <person name="Kang H.J."/>
            <person name="Chung S.J."/>
            <person name="Senju S."/>
            <person name="Nishimura Y."/>
            <person name="Kim K.T."/>
        </authorList>
    </citation>
    <scope>INTERACTION WITH GTPBP1</scope>
</reference>
<reference key="20">
    <citation type="journal article" date="2011" name="Proc. Natl. Acad. Sci. U.S.A.">
        <title>Zinc-finger antiviral protein inhibits HIV-1 infection by selectively targeting multiply spliced viral mRNAs for degradation.</title>
        <authorList>
            <person name="Zhu Y."/>
            <person name="Chen G."/>
            <person name="Lv F."/>
            <person name="Wang X."/>
            <person name="Ji X."/>
            <person name="Xu Y."/>
            <person name="Sun J."/>
            <person name="Wu L."/>
            <person name="Zheng Y.T."/>
            <person name="Gao G."/>
        </authorList>
    </citation>
    <scope>INTERACTION WITH ZC3HAV1</scope>
</reference>
<reference key="21">
    <citation type="journal article" date="2012" name="Mol. Cell. Proteomics">
        <title>Comparative large-scale characterisation of plant vs. mammal proteins reveals similar and idiosyncratic N-alpha acetylation features.</title>
        <authorList>
            <person name="Bienvenut W.V."/>
            <person name="Sumpton D."/>
            <person name="Martinez A."/>
            <person name="Lilla S."/>
            <person name="Espagne C."/>
            <person name="Meinnel T."/>
            <person name="Giglione C."/>
        </authorList>
    </citation>
    <scope>ACETYLATION [LARGE SCALE ANALYSIS] AT ALA-2</scope>
    <scope>CLEAVAGE OF INITIATOR METHIONINE [LARGE SCALE ANALYSIS]</scope>
    <scope>IDENTIFICATION BY MASS SPECTROMETRY [LARGE SCALE ANALYSIS]</scope>
</reference>
<reference key="22">
    <citation type="journal article" date="2012" name="Proc. Natl. Acad. Sci. U.S.A.">
        <title>N-terminal acetylome analyses and functional insights of the N-terminal acetyltransferase NatB.</title>
        <authorList>
            <person name="Van Damme P."/>
            <person name="Lasa M."/>
            <person name="Polevoda B."/>
            <person name="Gazquez C."/>
            <person name="Elosegui-Artola A."/>
            <person name="Kim D.S."/>
            <person name="De Juan-Pardo E."/>
            <person name="Demeyer K."/>
            <person name="Hole K."/>
            <person name="Larrea E."/>
            <person name="Timmerman E."/>
            <person name="Prieto J."/>
            <person name="Arnesen T."/>
            <person name="Sherman F."/>
            <person name="Gevaert K."/>
            <person name="Aldabe R."/>
        </authorList>
    </citation>
    <scope>ACETYLATION [LARGE SCALE ANALYSIS] AT ALA-2</scope>
    <scope>CLEAVAGE OF INITIATOR METHIONINE [LARGE SCALE ANALYSIS]</scope>
    <scope>IDENTIFICATION BY MASS SPECTROMETRY [LARGE SCALE ANALYSIS]</scope>
</reference>
<reference key="23">
    <citation type="journal article" date="2013" name="J. Proteome Res.">
        <title>Toward a comprehensive characterization of a human cancer cell phosphoproteome.</title>
        <authorList>
            <person name="Zhou H."/>
            <person name="Di Palma S."/>
            <person name="Preisinger C."/>
            <person name="Peng M."/>
            <person name="Polat A.N."/>
            <person name="Heck A.J."/>
            <person name="Mohammed S."/>
        </authorList>
    </citation>
    <scope>IDENTIFICATION BY MASS SPECTROMETRY [LARGE SCALE ANALYSIS]</scope>
    <source>
        <tissue>Erythroleukemia</tissue>
    </source>
</reference>
<reference key="24">
    <citation type="journal article" date="2017" name="Nucleic Acids Res.">
        <title>A short splicing isoform of HBS1L links the cytoplasmic exosome and SKI complexes in humans.</title>
        <authorList>
            <person name="Kalisiak K."/>
            <person name="Kulinski T.M."/>
            <person name="Tomecki R."/>
            <person name="Cysewski D."/>
            <person name="Pietras Z."/>
            <person name="Chlebowski A."/>
            <person name="Kowalska K."/>
            <person name="Dziembowski A."/>
        </authorList>
    </citation>
    <scope>INTERACTION WITH ISOFORM 2 OF HBS1L</scope>
</reference>
<reference key="25">
    <citation type="journal article" date="2017" name="Nat. Struct. Mol. Biol.">
        <title>Site-specific mapping of the human SUMO proteome reveals co-modification with phosphorylation.</title>
        <authorList>
            <person name="Hendriks I.A."/>
            <person name="Lyon D."/>
            <person name="Young C."/>
            <person name="Jensen L.J."/>
            <person name="Vertegaal A.C."/>
            <person name="Nielsen M.L."/>
        </authorList>
    </citation>
    <scope>SUMOYLATION [LARGE SCALE ANALYSIS] AT LYS-151</scope>
    <scope>IDENTIFICATION BY MASS SPECTROMETRY [LARGE SCALE ANALYSIS]</scope>
</reference>
<reference evidence="19" key="26">
    <citation type="journal article" date="2006" name="Cell">
        <title>Reconstitution, activities, and structure of the eukaryotic RNA exosome.</title>
        <authorList>
            <person name="Liu Q."/>
            <person name="Greimann J.C."/>
            <person name="Lima C.D."/>
        </authorList>
    </citation>
    <scope>X-RAY CRYSTALLOGRAPHY (3.35 ANGSTROMS)</scope>
    <scope>RECONSTITUTION OF THE RNA EXOSOME CORE COMPLEX</scope>
</reference>
<reference key="27">
    <citation type="journal article" date="2007" name="Cell">
        <authorList>
            <person name="Liu Q."/>
            <person name="Greimann J.C."/>
            <person name="Lima C.D."/>
        </authorList>
    </citation>
    <scope>ERRATUM OF PUBMED:17174896</scope>
</reference>
<reference evidence="20 21" key="28">
    <citation type="journal article" date="2018" name="Cell">
        <title>Helicase-Dependent RNA Decay Illuminated by a Cryo-EM Structure of a Human Nuclear RNA Exosome-MTR4 Complex.</title>
        <authorList>
            <person name="Weick E.M."/>
            <person name="Puno M.R."/>
            <person name="Januszyk K."/>
            <person name="Zinder J.C."/>
            <person name="DiMattia M.A."/>
            <person name="Lima C.D."/>
        </authorList>
    </citation>
    <scope>STRUCTURE BY ELECTRON MICROSCOPY (3.45 ANGSTROMS)</scope>
    <scope>SUBUNIT</scope>
</reference>
<reference evidence="22" key="29">
    <citation type="journal article" date="2018" name="Elife">
        <title>Distinct and evolutionary conserved structural features of the human nuclear exosome complex.</title>
        <authorList>
            <person name="Gerlach P."/>
            <person name="Schuller J.M."/>
            <person name="Bonneau F."/>
            <person name="Basquin J."/>
            <person name="Reichelt P."/>
            <person name="Falk S."/>
            <person name="Conti E."/>
        </authorList>
    </citation>
    <scope>STRUCTURE BY ELECTRON MICROSCOPY (3.80 ANGSTROMS) OF THE RNA EXOSOME COMPLEX IN COMPLEX WITH MPP6</scope>
    <scope>SUBUNIT</scope>
</reference>
<reference key="30">
    <citation type="journal article" date="2012" name="Nat. Genet.">
        <title>Mutations in the RNA exosome component gene EXOSC3 cause pontocerebellar hypoplasia and spinal motor neuron degeneration.</title>
        <authorList>
            <person name="Wan J."/>
            <person name="Yourshaw M."/>
            <person name="Mamsa H."/>
            <person name="Rudnik-Schoneborn S."/>
            <person name="Menezes M.P."/>
            <person name="Hong J.E."/>
            <person name="Leong D.W."/>
            <person name="Senderek J."/>
            <person name="Salman M.S."/>
            <person name="Chitayat D."/>
            <person name="Seeman P."/>
            <person name="von Moers A."/>
            <person name="Graul-Neumann L."/>
            <person name="Kornberg A.J."/>
            <person name="Castro-Gago M."/>
            <person name="Sobrido M.J."/>
            <person name="Sanefuji M."/>
            <person name="Shieh P.B."/>
            <person name="Salamon N."/>
            <person name="Kim R.C."/>
            <person name="Vinters H.V."/>
            <person name="Chen Z."/>
            <person name="Zerres K."/>
            <person name="Ryan M.M."/>
            <person name="Nelson S.F."/>
            <person name="Jen J.C."/>
        </authorList>
    </citation>
    <scope>VARIANTS PCH1B ALA-31; ALA-132; PRO-139 AND ARG-238</scope>
</reference>
<reference key="31">
    <citation type="journal article" date="2015" name="Neurology">
        <title>GRID2 mutations span from congenital to mild adult-onset cerebellar ataxia.</title>
        <authorList>
            <person name="Coutelier M."/>
            <person name="Burglen L."/>
            <person name="Mundwiller E."/>
            <person name="Abada-Bendib M."/>
            <person name="Rodriguez D."/>
            <person name="Chantot-Bastaraud S."/>
            <person name="Rougeot C."/>
            <person name="Cournelle M.A."/>
            <person name="Milh M."/>
            <person name="Toutain A."/>
            <person name="Bacq D."/>
            <person name="Meyer V."/>
            <person name="Afenjar A."/>
            <person name="Deleuze J.F."/>
            <person name="Brice A."/>
            <person name="Heron D."/>
            <person name="Stevanin G."/>
            <person name="Durr A."/>
        </authorList>
    </citation>
    <scope>VARIANT PHE-80</scope>
</reference>
<dbReference type="EMBL" id="AF281132">
    <property type="protein sequence ID" value="AAF82133.1"/>
    <property type="molecule type" value="mRNA"/>
</dbReference>
<dbReference type="EMBL" id="AK289571">
    <property type="protein sequence ID" value="BAF82260.1"/>
    <property type="molecule type" value="mRNA"/>
</dbReference>
<dbReference type="EMBL" id="AK290864">
    <property type="protein sequence ID" value="BAF83553.1"/>
    <property type="molecule type" value="mRNA"/>
</dbReference>
<dbReference type="EMBL" id="AL138752">
    <property type="status" value="NOT_ANNOTATED_CDS"/>
    <property type="molecule type" value="Genomic_DNA"/>
</dbReference>
<dbReference type="EMBL" id="CH471071">
    <property type="protein sequence ID" value="EAW58264.1"/>
    <property type="molecule type" value="Genomic_DNA"/>
</dbReference>
<dbReference type="EMBL" id="BC002437">
    <property type="protein sequence ID" value="AAH02437.1"/>
    <property type="molecule type" value="mRNA"/>
</dbReference>
<dbReference type="EMBL" id="BC008880">
    <property type="protein sequence ID" value="AAH08880.1"/>
    <property type="molecule type" value="mRNA"/>
</dbReference>
<dbReference type="EMBL" id="AF151860">
    <property type="protein sequence ID" value="AAD34097.1"/>
    <property type="molecule type" value="mRNA"/>
</dbReference>
<dbReference type="CCDS" id="CCDS35016.1">
    <molecule id="Q9NQT5-1"/>
</dbReference>
<dbReference type="CCDS" id="CCDS43805.1">
    <molecule id="Q9NQT5-2"/>
</dbReference>
<dbReference type="RefSeq" id="NP_001002269.1">
    <molecule id="Q9NQT5-2"/>
    <property type="nucleotide sequence ID" value="NM_001002269.2"/>
</dbReference>
<dbReference type="RefSeq" id="NP_057126.2">
    <molecule id="Q9NQT5-1"/>
    <property type="nucleotide sequence ID" value="NM_016042.4"/>
</dbReference>
<dbReference type="PDB" id="2NN6">
    <property type="method" value="X-ray"/>
    <property type="resolution" value="3.35 A"/>
    <property type="chains" value="G=1-275"/>
</dbReference>
<dbReference type="PDB" id="6D6Q">
    <property type="method" value="EM"/>
    <property type="resolution" value="3.45 A"/>
    <property type="chains" value="G=1-275"/>
</dbReference>
<dbReference type="PDB" id="6D6R">
    <property type="method" value="EM"/>
    <property type="resolution" value="3.45 A"/>
    <property type="chains" value="G=1-275"/>
</dbReference>
<dbReference type="PDB" id="6H25">
    <property type="method" value="EM"/>
    <property type="resolution" value="3.80 A"/>
    <property type="chains" value="G=1-275"/>
</dbReference>
<dbReference type="PDB" id="9G8M">
    <property type="method" value="EM"/>
    <property type="resolution" value="3.30 A"/>
    <property type="chains" value="H=1-275"/>
</dbReference>
<dbReference type="PDB" id="9G8N">
    <property type="method" value="EM"/>
    <property type="resolution" value="3.70 A"/>
    <property type="chains" value="H=1-275"/>
</dbReference>
<dbReference type="PDB" id="9G8O">
    <property type="method" value="EM"/>
    <property type="resolution" value="3.40 A"/>
    <property type="chains" value="H=1-275"/>
</dbReference>
<dbReference type="PDB" id="9G8P">
    <property type="method" value="EM"/>
    <property type="resolution" value="7.00 A"/>
    <property type="chains" value="H=1-275"/>
</dbReference>
<dbReference type="PDBsum" id="2NN6"/>
<dbReference type="PDBsum" id="6D6Q"/>
<dbReference type="PDBsum" id="6D6R"/>
<dbReference type="PDBsum" id="6H25"/>
<dbReference type="PDBsum" id="9G8M"/>
<dbReference type="PDBsum" id="9G8N"/>
<dbReference type="PDBsum" id="9G8O"/>
<dbReference type="PDBsum" id="9G8P"/>
<dbReference type="EMDB" id="EMD-0127"/>
<dbReference type="EMDB" id="EMD-0128"/>
<dbReference type="EMDB" id="EMD-14515"/>
<dbReference type="EMDB" id="EMD-51133"/>
<dbReference type="EMDB" id="EMD-51134"/>
<dbReference type="EMDB" id="EMD-51135"/>
<dbReference type="EMDB" id="EMD-7808"/>
<dbReference type="EMDB" id="EMD-7809"/>
<dbReference type="SMR" id="Q9NQT5"/>
<dbReference type="BioGRID" id="119217">
    <property type="interactions" value="107"/>
</dbReference>
<dbReference type="ComplexPortal" id="CPX-476">
    <property type="entry name" value="Nuclear exosome complex, DIS3-EXOSC10 variant"/>
</dbReference>
<dbReference type="ComplexPortal" id="CPX-591">
    <property type="entry name" value="Nucleolar exosome complex, EXOSC10 variant"/>
</dbReference>
<dbReference type="ComplexPortal" id="CPX-592">
    <property type="entry name" value="Cytoplasmic exosome complex, DIS3L variant"/>
</dbReference>
<dbReference type="ComplexPortal" id="CPX-593">
    <property type="entry name" value="Exosome complex, DIS3 variant"/>
</dbReference>
<dbReference type="ComplexPortal" id="CPX-600">
    <property type="entry name" value="Cytoplasmic exosome complex, DIS3L-EXOSC10 variant"/>
</dbReference>
<dbReference type="CORUM" id="Q9NQT5"/>
<dbReference type="DIP" id="DIP-29847N"/>
<dbReference type="FunCoup" id="Q9NQT5">
    <property type="interactions" value="2782"/>
</dbReference>
<dbReference type="IntAct" id="Q9NQT5">
    <property type="interactions" value="58"/>
</dbReference>
<dbReference type="MINT" id="Q9NQT5"/>
<dbReference type="STRING" id="9606.ENSP00000323046"/>
<dbReference type="GlyGen" id="Q9NQT5">
    <property type="glycosylation" value="1 site, 1 O-linked glycan (1 site)"/>
</dbReference>
<dbReference type="iPTMnet" id="Q9NQT5"/>
<dbReference type="PhosphoSitePlus" id="Q9NQT5"/>
<dbReference type="SwissPalm" id="Q9NQT5"/>
<dbReference type="BioMuta" id="EXOSC3"/>
<dbReference type="DMDM" id="14285758"/>
<dbReference type="jPOST" id="Q9NQT5"/>
<dbReference type="MassIVE" id="Q9NQT5"/>
<dbReference type="PaxDb" id="9606-ENSP00000323046"/>
<dbReference type="PeptideAtlas" id="Q9NQT5"/>
<dbReference type="ProteomicsDB" id="82184">
    <molecule id="Q9NQT5-1"/>
</dbReference>
<dbReference type="ProteomicsDB" id="82185">
    <molecule id="Q9NQT5-2"/>
</dbReference>
<dbReference type="Pumba" id="Q9NQT5"/>
<dbReference type="Antibodypedia" id="12051">
    <property type="antibodies" value="288 antibodies from 27 providers"/>
</dbReference>
<dbReference type="DNASU" id="51010"/>
<dbReference type="Ensembl" id="ENST00000327304.10">
    <molecule id="Q9NQT5-1"/>
    <property type="protein sequence ID" value="ENSP00000323046.4"/>
    <property type="gene ID" value="ENSG00000107371.14"/>
</dbReference>
<dbReference type="Ensembl" id="ENST00000396521.3">
    <molecule id="Q9NQT5-2"/>
    <property type="protein sequence ID" value="ENSP00000379775.3"/>
    <property type="gene ID" value="ENSG00000107371.14"/>
</dbReference>
<dbReference type="Ensembl" id="ENST00000465229.5">
    <molecule id="Q9NQT5-2"/>
    <property type="protein sequence ID" value="ENSP00000418422.1"/>
    <property type="gene ID" value="ENSG00000107371.14"/>
</dbReference>
<dbReference type="Ensembl" id="ENST00000679059.1">
    <molecule id="Q9NQT5-2"/>
    <property type="protein sequence ID" value="ENSP00000503947.1"/>
    <property type="gene ID" value="ENSG00000107371.14"/>
</dbReference>
<dbReference type="GeneID" id="51010"/>
<dbReference type="KEGG" id="hsa:51010"/>
<dbReference type="MANE-Select" id="ENST00000327304.10">
    <property type="protein sequence ID" value="ENSP00000323046.4"/>
    <property type="RefSeq nucleotide sequence ID" value="NM_016042.4"/>
    <property type="RefSeq protein sequence ID" value="NP_057126.2"/>
</dbReference>
<dbReference type="UCSC" id="uc004aal.4">
    <molecule id="Q9NQT5-1"/>
    <property type="organism name" value="human"/>
</dbReference>
<dbReference type="AGR" id="HGNC:17944"/>
<dbReference type="CTD" id="51010"/>
<dbReference type="DisGeNET" id="51010"/>
<dbReference type="GeneCards" id="EXOSC3"/>
<dbReference type="GeneReviews" id="EXOSC3"/>
<dbReference type="HGNC" id="HGNC:17944">
    <property type="gene designation" value="EXOSC3"/>
</dbReference>
<dbReference type="HPA" id="ENSG00000107371">
    <property type="expression patterns" value="Low tissue specificity"/>
</dbReference>
<dbReference type="MalaCards" id="EXOSC3"/>
<dbReference type="MIM" id="606489">
    <property type="type" value="gene"/>
</dbReference>
<dbReference type="MIM" id="614678">
    <property type="type" value="phenotype"/>
</dbReference>
<dbReference type="neXtProt" id="NX_Q9NQT5"/>
<dbReference type="OpenTargets" id="ENSG00000107371"/>
<dbReference type="Orphanet" id="2254">
    <property type="disease" value="Pontocerebellar hypoplasia type 1"/>
</dbReference>
<dbReference type="PharmGKB" id="PA134926550"/>
<dbReference type="VEuPathDB" id="HostDB:ENSG00000107371"/>
<dbReference type="eggNOG" id="KOG1004">
    <property type="taxonomic scope" value="Eukaryota"/>
</dbReference>
<dbReference type="GeneTree" id="ENSGT00940000153596"/>
<dbReference type="HOGENOM" id="CLU_069847_3_0_1"/>
<dbReference type="InParanoid" id="Q9NQT5"/>
<dbReference type="OMA" id="SYMAFPN"/>
<dbReference type="OrthoDB" id="340500at2759"/>
<dbReference type="PAN-GO" id="Q9NQT5">
    <property type="GO annotations" value="11 GO annotations based on evolutionary models"/>
</dbReference>
<dbReference type="PhylomeDB" id="Q9NQT5"/>
<dbReference type="TreeFam" id="TF314927"/>
<dbReference type="PathwayCommons" id="Q9NQT5"/>
<dbReference type="Reactome" id="R-HSA-380994">
    <property type="pathway name" value="ATF4 activates genes in response to endoplasmic reticulum stress"/>
</dbReference>
<dbReference type="Reactome" id="R-HSA-429958">
    <property type="pathway name" value="mRNA decay by 3' to 5' exoribonuclease"/>
</dbReference>
<dbReference type="Reactome" id="R-HSA-450385">
    <property type="pathway name" value="Butyrate Response Factor 1 (BRF1) binds and destabilizes mRNA"/>
</dbReference>
<dbReference type="Reactome" id="R-HSA-450513">
    <property type="pathway name" value="Tristetraprolin (TTP, ZFP36) binds and destabilizes mRNA"/>
</dbReference>
<dbReference type="Reactome" id="R-HSA-450604">
    <property type="pathway name" value="KSRP (KHSRP) binds and destabilizes mRNA"/>
</dbReference>
<dbReference type="Reactome" id="R-HSA-6791226">
    <property type="pathway name" value="Major pathway of rRNA processing in the nucleolus and cytosol"/>
</dbReference>
<dbReference type="SignaLink" id="Q9NQT5"/>
<dbReference type="SIGNOR" id="Q9NQT5"/>
<dbReference type="BioGRID-ORCS" id="51010">
    <property type="hits" value="790 hits in 1167 CRISPR screens"/>
</dbReference>
<dbReference type="CD-CODE" id="91857CE7">
    <property type="entry name" value="Nucleolus"/>
</dbReference>
<dbReference type="ChiTaRS" id="EXOSC3">
    <property type="organism name" value="human"/>
</dbReference>
<dbReference type="EvolutionaryTrace" id="Q9NQT5"/>
<dbReference type="GeneWiki" id="Exosome_component_3"/>
<dbReference type="GenomeRNAi" id="51010"/>
<dbReference type="Pharos" id="Q9NQT5">
    <property type="development level" value="Tbio"/>
</dbReference>
<dbReference type="PRO" id="PR:Q9NQT5"/>
<dbReference type="Proteomes" id="UP000005640">
    <property type="component" value="Chromosome 9"/>
</dbReference>
<dbReference type="RNAct" id="Q9NQT5">
    <property type="molecule type" value="protein"/>
</dbReference>
<dbReference type="Bgee" id="ENSG00000107371">
    <property type="expression patterns" value="Expressed in oocyte and 180 other cell types or tissues"/>
</dbReference>
<dbReference type="GO" id="GO:0005737">
    <property type="term" value="C:cytoplasm"/>
    <property type="evidence" value="ECO:0000314"/>
    <property type="project" value="UniProtKB"/>
</dbReference>
<dbReference type="GO" id="GO:0000177">
    <property type="term" value="C:cytoplasmic exosome (RNase complex)"/>
    <property type="evidence" value="ECO:0000314"/>
    <property type="project" value="UniProtKB"/>
</dbReference>
<dbReference type="GO" id="GO:0005829">
    <property type="term" value="C:cytosol"/>
    <property type="evidence" value="ECO:0000314"/>
    <property type="project" value="ComplexPortal"/>
</dbReference>
<dbReference type="GO" id="GO:0000791">
    <property type="term" value="C:euchromatin"/>
    <property type="evidence" value="ECO:0000315"/>
    <property type="project" value="UniProtKB"/>
</dbReference>
<dbReference type="GO" id="GO:0000178">
    <property type="term" value="C:exosome (RNase complex)"/>
    <property type="evidence" value="ECO:0000314"/>
    <property type="project" value="UniProtKB"/>
</dbReference>
<dbReference type="GO" id="GO:0000176">
    <property type="term" value="C:nuclear exosome (RNase complex)"/>
    <property type="evidence" value="ECO:0000314"/>
    <property type="project" value="UniProtKB"/>
</dbReference>
<dbReference type="GO" id="GO:0101019">
    <property type="term" value="C:nucleolar exosome (RNase complex)"/>
    <property type="evidence" value="ECO:0000303"/>
    <property type="project" value="ComplexPortal"/>
</dbReference>
<dbReference type="GO" id="GO:0005730">
    <property type="term" value="C:nucleolus"/>
    <property type="evidence" value="ECO:0000314"/>
    <property type="project" value="UniProtKB"/>
</dbReference>
<dbReference type="GO" id="GO:0005654">
    <property type="term" value="C:nucleoplasm"/>
    <property type="evidence" value="ECO:0000314"/>
    <property type="project" value="HPA"/>
</dbReference>
<dbReference type="GO" id="GO:0005634">
    <property type="term" value="C:nucleus"/>
    <property type="evidence" value="ECO:0000314"/>
    <property type="project" value="UniProtKB"/>
</dbReference>
<dbReference type="GO" id="GO:0000175">
    <property type="term" value="F:3'-5'-RNA exonuclease activity"/>
    <property type="evidence" value="ECO:0000303"/>
    <property type="project" value="UniProtKB"/>
</dbReference>
<dbReference type="GO" id="GO:0003723">
    <property type="term" value="F:RNA binding"/>
    <property type="evidence" value="ECO:0000318"/>
    <property type="project" value="GO_Central"/>
</dbReference>
<dbReference type="GO" id="GO:0071034">
    <property type="term" value="P:CUT catabolic process"/>
    <property type="evidence" value="ECO:0000315"/>
    <property type="project" value="UniProtKB"/>
</dbReference>
<dbReference type="GO" id="GO:0045006">
    <property type="term" value="P:DNA deamination"/>
    <property type="evidence" value="ECO:0000314"/>
    <property type="project" value="UniProtKB"/>
</dbReference>
<dbReference type="GO" id="GO:0000467">
    <property type="term" value="P:exonucleolytic trimming to generate mature 3'-end of 5.8S rRNA from tricistronic rRNA transcript (SSU-rRNA, 5.8S rRNA, LSU-rRNA)"/>
    <property type="evidence" value="ECO:0000318"/>
    <property type="project" value="GO_Central"/>
</dbReference>
<dbReference type="GO" id="GO:0045190">
    <property type="term" value="P:isotype switching"/>
    <property type="evidence" value="ECO:0000250"/>
    <property type="project" value="UniProtKB"/>
</dbReference>
<dbReference type="GO" id="GO:0006402">
    <property type="term" value="P:mRNA catabolic process"/>
    <property type="evidence" value="ECO:0000315"/>
    <property type="project" value="UniProtKB"/>
</dbReference>
<dbReference type="GO" id="GO:0071035">
    <property type="term" value="P:nuclear polyadenylation-dependent rRNA catabolic process"/>
    <property type="evidence" value="ECO:0000318"/>
    <property type="project" value="GO_Central"/>
</dbReference>
<dbReference type="GO" id="GO:0000956">
    <property type="term" value="P:nuclear-transcribed mRNA catabolic process"/>
    <property type="evidence" value="ECO:0000318"/>
    <property type="project" value="GO_Central"/>
</dbReference>
<dbReference type="GO" id="GO:0071051">
    <property type="term" value="P:poly(A)-dependent snoRNA 3'-end processing"/>
    <property type="evidence" value="ECO:0000318"/>
    <property type="project" value="GO_Central"/>
</dbReference>
<dbReference type="GO" id="GO:0045830">
    <property type="term" value="P:positive regulation of isotype switching"/>
    <property type="evidence" value="ECO:0007669"/>
    <property type="project" value="Ensembl"/>
</dbReference>
<dbReference type="GO" id="GO:0006401">
    <property type="term" value="P:RNA catabolic process"/>
    <property type="evidence" value="ECO:0000314"/>
    <property type="project" value="ComplexPortal"/>
</dbReference>
<dbReference type="GO" id="GO:0006396">
    <property type="term" value="P:RNA processing"/>
    <property type="evidence" value="ECO:0000314"/>
    <property type="project" value="ComplexPortal"/>
</dbReference>
<dbReference type="GO" id="GO:0006364">
    <property type="term" value="P:rRNA processing"/>
    <property type="evidence" value="ECO:0000314"/>
    <property type="project" value="UniProtKB"/>
</dbReference>
<dbReference type="GO" id="GO:0071038">
    <property type="term" value="P:TRAMP-dependent tRNA surveillance pathway"/>
    <property type="evidence" value="ECO:0000318"/>
    <property type="project" value="GO_Central"/>
</dbReference>
<dbReference type="GO" id="GO:0034475">
    <property type="term" value="P:U4 snRNA 3'-end processing"/>
    <property type="evidence" value="ECO:0000318"/>
    <property type="project" value="GO_Central"/>
</dbReference>
<dbReference type="CDD" id="cd22526">
    <property type="entry name" value="KH-I_Rrp40"/>
    <property type="match status" value="1"/>
</dbReference>
<dbReference type="CDD" id="cd05790">
    <property type="entry name" value="S1_Rrp40"/>
    <property type="match status" value="1"/>
</dbReference>
<dbReference type="FunFam" id="2.40.50.140:FF:000112">
    <property type="entry name" value="Exosome complex component RRP40"/>
    <property type="match status" value="1"/>
</dbReference>
<dbReference type="FunFam" id="2.40.50.100:FF:000044">
    <property type="entry name" value="exosome complex component RRP40"/>
    <property type="match status" value="1"/>
</dbReference>
<dbReference type="FunFam" id="3.30.1370.10:FF:000038">
    <property type="entry name" value="exosome complex component RRP40"/>
    <property type="match status" value="1"/>
</dbReference>
<dbReference type="Gene3D" id="2.40.50.100">
    <property type="match status" value="1"/>
</dbReference>
<dbReference type="Gene3D" id="3.30.1370.10">
    <property type="entry name" value="K Homology domain, type 1"/>
    <property type="match status" value="1"/>
</dbReference>
<dbReference type="Gene3D" id="2.40.50.140">
    <property type="entry name" value="Nucleic acid-binding proteins"/>
    <property type="match status" value="1"/>
</dbReference>
<dbReference type="InterPro" id="IPR026699">
    <property type="entry name" value="Exosome_RNA_bind1/RRP40/RRP4"/>
</dbReference>
<dbReference type="InterPro" id="IPR004088">
    <property type="entry name" value="KH_dom_type_1"/>
</dbReference>
<dbReference type="InterPro" id="IPR036612">
    <property type="entry name" value="KH_dom_type_1_sf"/>
</dbReference>
<dbReference type="InterPro" id="IPR012340">
    <property type="entry name" value="NA-bd_OB-fold"/>
</dbReference>
<dbReference type="InterPro" id="IPR049469">
    <property type="entry name" value="RRP40_KH-I"/>
</dbReference>
<dbReference type="InterPro" id="IPR048541">
    <property type="entry name" value="RRP40_N"/>
</dbReference>
<dbReference type="InterPro" id="IPR037319">
    <property type="entry name" value="Rrp40_S1"/>
</dbReference>
<dbReference type="PANTHER" id="PTHR21321:SF1">
    <property type="entry name" value="EXOSOME COMPLEX COMPONENT RRP40"/>
    <property type="match status" value="1"/>
</dbReference>
<dbReference type="PANTHER" id="PTHR21321">
    <property type="entry name" value="PNAS-3 RELATED"/>
    <property type="match status" value="1"/>
</dbReference>
<dbReference type="Pfam" id="PF15985">
    <property type="entry name" value="KH_6"/>
    <property type="match status" value="1"/>
</dbReference>
<dbReference type="Pfam" id="PF21261">
    <property type="entry name" value="RRP40_N_mamm"/>
    <property type="match status" value="1"/>
</dbReference>
<dbReference type="Pfam" id="PF21262">
    <property type="entry name" value="RRP40_S1"/>
    <property type="match status" value="1"/>
</dbReference>
<dbReference type="SUPFAM" id="SSF54791">
    <property type="entry name" value="Eukaryotic type KH-domain (KH-domain type I)"/>
    <property type="match status" value="1"/>
</dbReference>
<dbReference type="SUPFAM" id="SSF50249">
    <property type="entry name" value="Nucleic acid-binding proteins"/>
    <property type="match status" value="1"/>
</dbReference>
<dbReference type="SUPFAM" id="SSF110324">
    <property type="entry name" value="Ribosomal L27 protein-like"/>
    <property type="match status" value="1"/>
</dbReference>
<accession>Q9NQT5</accession>
<accession>A8K0K6</accession>
<accession>Q5QP85</accession>
<accession>Q9Y3A8</accession>
<gene>
    <name type="primary">EXOSC3</name>
    <name type="synonym">RRP40</name>
    <name type="ORF">CGI-102</name>
</gene>
<evidence type="ECO:0000269" key="1">
    <source>
    </source>
</evidence>
<evidence type="ECO:0000269" key="2">
    <source>
    </source>
</evidence>
<evidence type="ECO:0000269" key="3">
    <source>
    </source>
</evidence>
<evidence type="ECO:0000269" key="4">
    <source>
    </source>
</evidence>
<evidence type="ECO:0000269" key="5">
    <source>
    </source>
</evidence>
<evidence type="ECO:0000269" key="6">
    <source>
    </source>
</evidence>
<evidence type="ECO:0000269" key="7">
    <source>
    </source>
</evidence>
<evidence type="ECO:0000269" key="8">
    <source>
    </source>
</evidence>
<evidence type="ECO:0000269" key="9">
    <source>
    </source>
</evidence>
<evidence type="ECO:0000269" key="10">
    <source>
    </source>
</evidence>
<evidence type="ECO:0000269" key="11">
    <source>
    </source>
</evidence>
<evidence type="ECO:0000269" key="12">
    <source>
    </source>
</evidence>
<evidence type="ECO:0000269" key="13">
    <source>
    </source>
</evidence>
<evidence type="ECO:0000269" key="14">
    <source>
    </source>
</evidence>
<evidence type="ECO:0000269" key="15">
    <source>
    </source>
</evidence>
<evidence type="ECO:0000269" key="16">
    <source ref="6"/>
</evidence>
<evidence type="ECO:0000303" key="17">
    <source>
    </source>
</evidence>
<evidence type="ECO:0000305" key="18"/>
<evidence type="ECO:0007744" key="19">
    <source>
        <dbReference type="PDB" id="2NN6"/>
    </source>
</evidence>
<evidence type="ECO:0007744" key="20">
    <source>
        <dbReference type="PDB" id="6D6Q"/>
    </source>
</evidence>
<evidence type="ECO:0007744" key="21">
    <source>
        <dbReference type="PDB" id="6D6R"/>
    </source>
</evidence>
<evidence type="ECO:0007744" key="22">
    <source>
        <dbReference type="PDB" id="6H25"/>
    </source>
</evidence>
<evidence type="ECO:0007744" key="23">
    <source>
    </source>
</evidence>
<evidence type="ECO:0007744" key="24">
    <source>
    </source>
</evidence>
<evidence type="ECO:0007744" key="25">
    <source>
    </source>
</evidence>
<evidence type="ECO:0007744" key="26">
    <source>
    </source>
</evidence>
<evidence type="ECO:0007829" key="27">
    <source>
        <dbReference type="PDB" id="2NN6"/>
    </source>
</evidence>
<evidence type="ECO:0007829" key="28">
    <source>
        <dbReference type="PDB" id="6D6Q"/>
    </source>
</evidence>